<dbReference type="EC" id="2.5.1.75" evidence="1"/>
<dbReference type="EMBL" id="CP000087">
    <property type="protein sequence ID" value="ABE04860.1"/>
    <property type="molecule type" value="Genomic_DNA"/>
</dbReference>
<dbReference type="RefSeq" id="WP_011477447.1">
    <property type="nucleotide sequence ID" value="NC_007940.1"/>
</dbReference>
<dbReference type="SMR" id="Q1RIF4"/>
<dbReference type="KEGG" id="rbe:RBE_0779"/>
<dbReference type="eggNOG" id="COG0324">
    <property type="taxonomic scope" value="Bacteria"/>
</dbReference>
<dbReference type="HOGENOM" id="CLU_032616_0_1_5"/>
<dbReference type="OrthoDB" id="9776390at2"/>
<dbReference type="Proteomes" id="UP000001951">
    <property type="component" value="Chromosome"/>
</dbReference>
<dbReference type="GO" id="GO:0005524">
    <property type="term" value="F:ATP binding"/>
    <property type="evidence" value="ECO:0007669"/>
    <property type="project" value="UniProtKB-UniRule"/>
</dbReference>
<dbReference type="GO" id="GO:0052381">
    <property type="term" value="F:tRNA dimethylallyltransferase activity"/>
    <property type="evidence" value="ECO:0007669"/>
    <property type="project" value="UniProtKB-UniRule"/>
</dbReference>
<dbReference type="GO" id="GO:0006400">
    <property type="term" value="P:tRNA modification"/>
    <property type="evidence" value="ECO:0007669"/>
    <property type="project" value="TreeGrafter"/>
</dbReference>
<dbReference type="Gene3D" id="1.10.20.140">
    <property type="match status" value="1"/>
</dbReference>
<dbReference type="Gene3D" id="3.40.50.300">
    <property type="entry name" value="P-loop containing nucleotide triphosphate hydrolases"/>
    <property type="match status" value="1"/>
</dbReference>
<dbReference type="HAMAP" id="MF_00185">
    <property type="entry name" value="IPP_trans"/>
    <property type="match status" value="1"/>
</dbReference>
<dbReference type="InterPro" id="IPR039657">
    <property type="entry name" value="Dimethylallyltransferase"/>
</dbReference>
<dbReference type="InterPro" id="IPR018022">
    <property type="entry name" value="IPT"/>
</dbReference>
<dbReference type="InterPro" id="IPR027417">
    <property type="entry name" value="P-loop_NTPase"/>
</dbReference>
<dbReference type="NCBIfam" id="TIGR00174">
    <property type="entry name" value="miaA"/>
    <property type="match status" value="1"/>
</dbReference>
<dbReference type="PANTHER" id="PTHR11088">
    <property type="entry name" value="TRNA DIMETHYLALLYLTRANSFERASE"/>
    <property type="match status" value="1"/>
</dbReference>
<dbReference type="PANTHER" id="PTHR11088:SF60">
    <property type="entry name" value="TRNA DIMETHYLALLYLTRANSFERASE"/>
    <property type="match status" value="1"/>
</dbReference>
<dbReference type="Pfam" id="PF01715">
    <property type="entry name" value="IPPT"/>
    <property type="match status" value="1"/>
</dbReference>
<dbReference type="SUPFAM" id="SSF52540">
    <property type="entry name" value="P-loop containing nucleoside triphosphate hydrolases"/>
    <property type="match status" value="1"/>
</dbReference>
<evidence type="ECO:0000255" key="1">
    <source>
        <dbReference type="HAMAP-Rule" id="MF_00185"/>
    </source>
</evidence>
<accession>Q1RIF4</accession>
<comment type="function">
    <text evidence="1">Catalyzes the transfer of a dimethylallyl group onto the adenine at position 37 in tRNAs that read codons beginning with uridine, leading to the formation of N6-(dimethylallyl)adenosine (i(6)A).</text>
</comment>
<comment type="catalytic activity">
    <reaction evidence="1">
        <text>adenosine(37) in tRNA + dimethylallyl diphosphate = N(6)-dimethylallyladenosine(37) in tRNA + diphosphate</text>
        <dbReference type="Rhea" id="RHEA:26482"/>
        <dbReference type="Rhea" id="RHEA-COMP:10162"/>
        <dbReference type="Rhea" id="RHEA-COMP:10375"/>
        <dbReference type="ChEBI" id="CHEBI:33019"/>
        <dbReference type="ChEBI" id="CHEBI:57623"/>
        <dbReference type="ChEBI" id="CHEBI:74411"/>
        <dbReference type="ChEBI" id="CHEBI:74415"/>
        <dbReference type="EC" id="2.5.1.75"/>
    </reaction>
</comment>
<comment type="cofactor">
    <cofactor evidence="1">
        <name>Mg(2+)</name>
        <dbReference type="ChEBI" id="CHEBI:18420"/>
    </cofactor>
</comment>
<comment type="subunit">
    <text evidence="1">Monomer.</text>
</comment>
<comment type="similarity">
    <text evidence="1">Belongs to the IPP transferase family.</text>
</comment>
<gene>
    <name evidence="1" type="primary">miaA</name>
    <name type="ordered locus">RBE_0779</name>
</gene>
<keyword id="KW-0067">ATP-binding</keyword>
<keyword id="KW-0460">Magnesium</keyword>
<keyword id="KW-0547">Nucleotide-binding</keyword>
<keyword id="KW-0808">Transferase</keyword>
<keyword id="KW-0819">tRNA processing</keyword>
<sequence>MPKKEIIILCGPTASGKSYLGHALAKACDGEIINIDSMQVYKEIPIITASPPESYKSEIPYHLYNFLPITEDFSVVKYLKLAAEKINQVTASGKLPILIGGTGLYINSLVFGYNNIPDISEDLRQQVRKLHNEIGNTELHNRLTKLDPLASSKINQSDTQRLIRAYEVVLQTGKSIFSFQTLPKEQILSEFNFKIIFLNPERKFLYKICDERLANIFKDGAIDEIALIKKQFNPDYLNLKAVGIKEILAYLENKLTLSEALNLAQTRTRRYAKRQITWFKHQIKEKITLDYSNEEDFLQVTRKLSILIDLPNSNK</sequence>
<proteinExistence type="inferred from homology"/>
<protein>
    <recommendedName>
        <fullName evidence="1">tRNA dimethylallyltransferase</fullName>
        <ecNumber evidence="1">2.5.1.75</ecNumber>
    </recommendedName>
    <alternativeName>
        <fullName evidence="1">Dimethylallyl diphosphate:tRNA dimethylallyltransferase</fullName>
        <shortName evidence="1">DMAPP:tRNA dimethylallyltransferase</shortName>
        <shortName evidence="1">DMATase</shortName>
    </alternativeName>
    <alternativeName>
        <fullName evidence="1">Isopentenyl-diphosphate:tRNA isopentenyltransferase</fullName>
        <shortName evidence="1">IPP transferase</shortName>
        <shortName evidence="1">IPPT</shortName>
        <shortName evidence="1">IPTase</shortName>
    </alternativeName>
</protein>
<feature type="chain" id="PRO_0000277987" description="tRNA dimethylallyltransferase">
    <location>
        <begin position="1"/>
        <end position="315"/>
    </location>
</feature>
<feature type="region of interest" description="Interaction with substrate tRNA" evidence="1">
    <location>
        <begin position="36"/>
        <end position="39"/>
    </location>
</feature>
<feature type="region of interest" description="Interaction with substrate tRNA" evidence="1">
    <location>
        <begin position="160"/>
        <end position="164"/>
    </location>
</feature>
<feature type="binding site" evidence="1">
    <location>
        <begin position="11"/>
        <end position="18"/>
    </location>
    <ligand>
        <name>ATP</name>
        <dbReference type="ChEBI" id="CHEBI:30616"/>
    </ligand>
</feature>
<feature type="binding site" evidence="1">
    <location>
        <begin position="13"/>
        <end position="18"/>
    </location>
    <ligand>
        <name>substrate</name>
    </ligand>
</feature>
<feature type="site" description="Interaction with substrate tRNA" evidence="1">
    <location>
        <position position="102"/>
    </location>
</feature>
<feature type="site" description="Interaction with substrate tRNA" evidence="1">
    <location>
        <position position="124"/>
    </location>
</feature>
<name>MIAA_RICBR</name>
<reference key="1">
    <citation type="journal article" date="2006" name="PLoS Genet.">
        <title>Genome sequence of Rickettsia bellii illuminates the role of amoebae in gene exchanges between intracellular pathogens.</title>
        <authorList>
            <person name="Ogata H."/>
            <person name="La Scola B."/>
            <person name="Audic S."/>
            <person name="Renesto P."/>
            <person name="Blanc G."/>
            <person name="Robert C."/>
            <person name="Fournier P.-E."/>
            <person name="Claverie J.-M."/>
            <person name="Raoult D."/>
        </authorList>
    </citation>
    <scope>NUCLEOTIDE SEQUENCE [LARGE SCALE GENOMIC DNA]</scope>
    <source>
        <strain>RML369-C</strain>
    </source>
</reference>
<organism>
    <name type="scientific">Rickettsia bellii (strain RML369-C)</name>
    <dbReference type="NCBI Taxonomy" id="336407"/>
    <lineage>
        <taxon>Bacteria</taxon>
        <taxon>Pseudomonadati</taxon>
        <taxon>Pseudomonadota</taxon>
        <taxon>Alphaproteobacteria</taxon>
        <taxon>Rickettsiales</taxon>
        <taxon>Rickettsiaceae</taxon>
        <taxon>Rickettsieae</taxon>
        <taxon>Rickettsia</taxon>
        <taxon>belli group</taxon>
    </lineage>
</organism>